<dbReference type="EC" id="7.1.1.9"/>
<dbReference type="EMBL" id="L29414">
    <property type="protein sequence ID" value="AAA53664.1"/>
    <property type="molecule type" value="Genomic_DNA"/>
</dbReference>
<dbReference type="EMBL" id="AF028216">
    <property type="protein sequence ID" value="AAC00109.1"/>
    <property type="molecule type" value="Genomic_DNA"/>
</dbReference>
<dbReference type="SMR" id="P98031"/>
<dbReference type="GO" id="GO:0005743">
    <property type="term" value="C:mitochondrial inner membrane"/>
    <property type="evidence" value="ECO:0007669"/>
    <property type="project" value="UniProtKB-SubCell"/>
</dbReference>
<dbReference type="GO" id="GO:0045277">
    <property type="term" value="C:respiratory chain complex IV"/>
    <property type="evidence" value="ECO:0000250"/>
    <property type="project" value="UniProtKB"/>
</dbReference>
<dbReference type="GO" id="GO:0005507">
    <property type="term" value="F:copper ion binding"/>
    <property type="evidence" value="ECO:0007669"/>
    <property type="project" value="InterPro"/>
</dbReference>
<dbReference type="GO" id="GO:0004129">
    <property type="term" value="F:cytochrome-c oxidase activity"/>
    <property type="evidence" value="ECO:0007669"/>
    <property type="project" value="UniProtKB-EC"/>
</dbReference>
<dbReference type="GO" id="GO:0042773">
    <property type="term" value="P:ATP synthesis coupled electron transport"/>
    <property type="evidence" value="ECO:0007669"/>
    <property type="project" value="TreeGrafter"/>
</dbReference>
<dbReference type="CDD" id="cd13912">
    <property type="entry name" value="CcO_II_C"/>
    <property type="match status" value="1"/>
</dbReference>
<dbReference type="FunFam" id="1.10.287.90:FF:000001">
    <property type="entry name" value="Cytochrome c oxidase subunit 2"/>
    <property type="match status" value="1"/>
</dbReference>
<dbReference type="FunFam" id="2.60.40.420:FF:000001">
    <property type="entry name" value="Cytochrome c oxidase subunit 2"/>
    <property type="match status" value="1"/>
</dbReference>
<dbReference type="Gene3D" id="1.10.287.90">
    <property type="match status" value="1"/>
</dbReference>
<dbReference type="Gene3D" id="2.60.40.420">
    <property type="entry name" value="Cupredoxins - blue copper proteins"/>
    <property type="match status" value="1"/>
</dbReference>
<dbReference type="InterPro" id="IPR045187">
    <property type="entry name" value="CcO_II"/>
</dbReference>
<dbReference type="InterPro" id="IPR002429">
    <property type="entry name" value="CcO_II-like_C"/>
</dbReference>
<dbReference type="InterPro" id="IPR034210">
    <property type="entry name" value="CcO_II_C"/>
</dbReference>
<dbReference type="InterPro" id="IPR001505">
    <property type="entry name" value="Copper_CuA"/>
</dbReference>
<dbReference type="InterPro" id="IPR008972">
    <property type="entry name" value="Cupredoxin"/>
</dbReference>
<dbReference type="InterPro" id="IPR014222">
    <property type="entry name" value="Cyt_c_oxidase_su2"/>
</dbReference>
<dbReference type="InterPro" id="IPR011759">
    <property type="entry name" value="Cyt_c_oxidase_su2_TM_dom"/>
</dbReference>
<dbReference type="InterPro" id="IPR036257">
    <property type="entry name" value="Cyt_c_oxidase_su2_TM_sf"/>
</dbReference>
<dbReference type="NCBIfam" id="TIGR02866">
    <property type="entry name" value="CoxB"/>
    <property type="match status" value="1"/>
</dbReference>
<dbReference type="PANTHER" id="PTHR22888:SF9">
    <property type="entry name" value="CYTOCHROME C OXIDASE SUBUNIT 2"/>
    <property type="match status" value="1"/>
</dbReference>
<dbReference type="PANTHER" id="PTHR22888">
    <property type="entry name" value="CYTOCHROME C OXIDASE, SUBUNIT II"/>
    <property type="match status" value="1"/>
</dbReference>
<dbReference type="Pfam" id="PF00116">
    <property type="entry name" value="COX2"/>
    <property type="match status" value="1"/>
</dbReference>
<dbReference type="Pfam" id="PF02790">
    <property type="entry name" value="COX2_TM"/>
    <property type="match status" value="1"/>
</dbReference>
<dbReference type="PRINTS" id="PR01166">
    <property type="entry name" value="CYCOXIDASEII"/>
</dbReference>
<dbReference type="SUPFAM" id="SSF49503">
    <property type="entry name" value="Cupredoxins"/>
    <property type="match status" value="1"/>
</dbReference>
<dbReference type="SUPFAM" id="SSF81464">
    <property type="entry name" value="Cytochrome c oxidase subunit II-like, transmembrane region"/>
    <property type="match status" value="1"/>
</dbReference>
<dbReference type="PROSITE" id="PS00078">
    <property type="entry name" value="COX2"/>
    <property type="match status" value="1"/>
</dbReference>
<dbReference type="PROSITE" id="PS50857">
    <property type="entry name" value="COX2_CUA"/>
    <property type="match status" value="1"/>
</dbReference>
<dbReference type="PROSITE" id="PS50999">
    <property type="entry name" value="COX2_TM"/>
    <property type="match status" value="1"/>
</dbReference>
<sequence>MAYPFQLGLQDATSPIMEELLHFHDHTLMIVFLISSLILYIISLMLTTKLTHTSTMDAQEVETVWTILPAIILILIALPSLRILYMMDEINNPSLTVKTMGHQWYWSYEYTDYEDLNFDSYMIPTQELKPGELRLLEVDNRVVLPMEMTIRMLISSEDVLHSWAVPSLGLKTDAIPGRLNQTTLMATRPGLYYGQCSEICGSNHSFMPIVLEMVPLSYFETWSALMV</sequence>
<reference key="1">
    <citation type="journal article" date="1994" name="Mol. Ecol.">
        <title>Molecular genetics of the most endangered canid: the Ethiopian wolf Canis simensis.</title>
        <authorList>
            <person name="Gottelli D."/>
            <person name="Sillero-Zubiri C."/>
            <person name="Applebaum G.D."/>
            <person name="Roy M.S."/>
            <person name="Girman D.J."/>
            <person name="Garcia-Moreno J."/>
            <person name="Ostrander E.A."/>
            <person name="Wayne R.K."/>
        </authorList>
    </citation>
    <scope>NUCLEOTIDE SEQUENCE [GENOMIC DNA]</scope>
</reference>
<reference key="2">
    <citation type="journal article" date="1997" name="Syst. Biol.">
        <title>Molecular systematics of the Canidae.</title>
        <authorList>
            <person name="Wayne R.K."/>
            <person name="Geffen E."/>
            <person name="Girman D.J."/>
            <person name="Koepfli K.-P."/>
            <person name="Lau L.M."/>
            <person name="Marshall C.R."/>
        </authorList>
    </citation>
    <scope>NUCLEOTIDE SEQUENCE [GENOMIC DNA]</scope>
</reference>
<comment type="function">
    <text evidence="3">Component of the cytochrome c oxidase, the last enzyme in the mitochondrial electron transport chain which drives oxidative phosphorylation. The respiratory chain contains 3 multisubunit complexes succinate dehydrogenase (complex II, CII), ubiquinol-cytochrome c oxidoreductase (cytochrome b-c1 complex, complex III, CIII) and cytochrome c oxidase (complex IV, CIV), that cooperate to transfer electrons derived from NADH and succinate to molecular oxygen, creating an electrochemical gradient over the inner membrane that drives transmembrane transport and the ATP synthase. Cytochrome c oxidase is the component of the respiratory chain that catalyzes the reduction of oxygen to water. Electrons originating from reduced cytochrome c in the intermembrane space (IMS) are transferred via the dinuclear copper A center (CU(A)) of subunit 2 and heme A of subunit 1 to the active site in subunit 1, a binuclear center (BNC) formed by heme A3 and copper B (CU(B)). The BNC reduces molecular oxygen to 2 water molecules using 4 electrons from cytochrome c in the IMS and 4 protons from the mitochondrial matrix.</text>
</comment>
<comment type="catalytic activity">
    <reaction evidence="3">
        <text>4 Fe(II)-[cytochrome c] + O2 + 8 H(+)(in) = 4 Fe(III)-[cytochrome c] + 2 H2O + 4 H(+)(out)</text>
        <dbReference type="Rhea" id="RHEA:11436"/>
        <dbReference type="Rhea" id="RHEA-COMP:10350"/>
        <dbReference type="Rhea" id="RHEA-COMP:14399"/>
        <dbReference type="ChEBI" id="CHEBI:15377"/>
        <dbReference type="ChEBI" id="CHEBI:15378"/>
        <dbReference type="ChEBI" id="CHEBI:15379"/>
        <dbReference type="ChEBI" id="CHEBI:29033"/>
        <dbReference type="ChEBI" id="CHEBI:29034"/>
        <dbReference type="EC" id="7.1.1.9"/>
    </reaction>
    <physiologicalReaction direction="left-to-right" evidence="3">
        <dbReference type="Rhea" id="RHEA:11437"/>
    </physiologicalReaction>
</comment>
<comment type="cofactor">
    <cofactor evidence="4">
        <name>Cu cation</name>
        <dbReference type="ChEBI" id="CHEBI:23378"/>
    </cofactor>
    <text evidence="4">Binds a dinuclear copper A center per subunit.</text>
</comment>
<comment type="subunit">
    <text evidence="1 4">Component of the cytochrome c oxidase (complex IV, CIV), a multisubunit enzyme composed of 14 subunits. The complex is composed of a catalytic core of 3 subunits MT-CO1, MT-CO2 and MT-CO3, encoded in the mitochondrial DNA, and 11 supernumerary subunits COX4I, COX5A, COX5B, COX6A, COX6B, COX6C, COX7A, COX7B, COX7C, COX8 and NDUFA4, which are encoded in the nuclear genome. The complex exists as a monomer or a dimer and forms supercomplexes (SCs) in the inner mitochondrial membrane with NADH-ubiquinone oxidoreductase (complex I, CI) and ubiquinol-cytochrome c oxidoreductase (cytochrome b-c1 complex, complex III, CIII), resulting in different assemblies (supercomplex SCI(1)III(2)IV(1) and megacomplex MCI(2)III(2)IV(2)) (By similarity). Found in a complex with TMEM177, COA6, COX18, COX20, SCO1 and SCO2. Interacts with TMEM177 in a COX20-dependent manner. Interacts with COX20. Interacts with COX16 (By similarity).</text>
</comment>
<comment type="subcellular location">
    <subcellularLocation>
        <location evidence="4">Mitochondrion inner membrane</location>
        <topology evidence="4">Multi-pass membrane protein</topology>
    </subcellularLocation>
</comment>
<comment type="similarity">
    <text evidence="5">Belongs to the cytochrome c oxidase subunit 2 family.</text>
</comment>
<accession>P98031</accession>
<evidence type="ECO:0000250" key="1">
    <source>
        <dbReference type="UniProtKB" id="P00403"/>
    </source>
</evidence>
<evidence type="ECO:0000250" key="2">
    <source>
        <dbReference type="UniProtKB" id="P00406"/>
    </source>
</evidence>
<evidence type="ECO:0000250" key="3">
    <source>
        <dbReference type="UniProtKB" id="P00410"/>
    </source>
</evidence>
<evidence type="ECO:0000250" key="4">
    <source>
        <dbReference type="UniProtKB" id="P68530"/>
    </source>
</evidence>
<evidence type="ECO:0000305" key="5"/>
<proteinExistence type="inferred from homology"/>
<gene>
    <name type="primary">MT-CO2</name>
    <name type="synonym">COII</name>
    <name type="synonym">COX2</name>
    <name type="synonym">COXII</name>
    <name type="synonym">MTCO2</name>
</gene>
<name>COX2_CANSI</name>
<keyword id="KW-0186">Copper</keyword>
<keyword id="KW-0249">Electron transport</keyword>
<keyword id="KW-0460">Magnesium</keyword>
<keyword id="KW-0472">Membrane</keyword>
<keyword id="KW-0479">Metal-binding</keyword>
<keyword id="KW-0496">Mitochondrion</keyword>
<keyword id="KW-0999">Mitochondrion inner membrane</keyword>
<keyword id="KW-0597">Phosphoprotein</keyword>
<keyword id="KW-0679">Respiratory chain</keyword>
<keyword id="KW-1278">Translocase</keyword>
<keyword id="KW-0812">Transmembrane</keyword>
<keyword id="KW-1133">Transmembrane helix</keyword>
<keyword id="KW-0813">Transport</keyword>
<geneLocation type="mitochondrion"/>
<protein>
    <recommendedName>
        <fullName>Cytochrome c oxidase subunit 2</fullName>
        <ecNumber>7.1.1.9</ecNumber>
    </recommendedName>
    <alternativeName>
        <fullName>Cytochrome c oxidase polypeptide II</fullName>
    </alternativeName>
</protein>
<feature type="chain" id="PRO_0000183537" description="Cytochrome c oxidase subunit 2">
    <location>
        <begin position="1"/>
        <end position="227"/>
    </location>
</feature>
<feature type="topological domain" description="Mitochondrial intermembrane" evidence="4">
    <location>
        <begin position="1"/>
        <end position="14"/>
    </location>
</feature>
<feature type="transmembrane region" description="Helical; Name=I" evidence="4">
    <location>
        <begin position="15"/>
        <end position="45"/>
    </location>
</feature>
<feature type="topological domain" description="Mitochondrial matrix" evidence="4">
    <location>
        <begin position="46"/>
        <end position="59"/>
    </location>
</feature>
<feature type="transmembrane region" description="Helical; Name=II" evidence="4">
    <location>
        <begin position="60"/>
        <end position="87"/>
    </location>
</feature>
<feature type="topological domain" description="Mitochondrial intermembrane" evidence="4">
    <location>
        <begin position="88"/>
        <end position="227"/>
    </location>
</feature>
<feature type="binding site" evidence="4">
    <location>
        <position position="161"/>
    </location>
    <ligand>
        <name>Cu cation</name>
        <dbReference type="ChEBI" id="CHEBI:23378"/>
        <label>A1</label>
    </ligand>
</feature>
<feature type="binding site" evidence="4">
    <location>
        <position position="196"/>
    </location>
    <ligand>
        <name>Cu cation</name>
        <dbReference type="ChEBI" id="CHEBI:23378"/>
        <label>A1</label>
    </ligand>
</feature>
<feature type="binding site" evidence="4">
    <location>
        <position position="196"/>
    </location>
    <ligand>
        <name>Cu cation</name>
        <dbReference type="ChEBI" id="CHEBI:23378"/>
        <label>A2</label>
    </ligand>
</feature>
<feature type="binding site" evidence="4">
    <location>
        <position position="198"/>
    </location>
    <ligand>
        <name>Cu cation</name>
        <dbReference type="ChEBI" id="CHEBI:23378"/>
        <label>A2</label>
    </ligand>
</feature>
<feature type="binding site" evidence="4">
    <location>
        <position position="198"/>
    </location>
    <ligand>
        <name>Mg(2+)</name>
        <dbReference type="ChEBI" id="CHEBI:18420"/>
        <note>ligand shared with MT-CO1</note>
    </ligand>
</feature>
<feature type="binding site" evidence="4">
    <location>
        <position position="200"/>
    </location>
    <ligand>
        <name>Cu cation</name>
        <dbReference type="ChEBI" id="CHEBI:23378"/>
        <label>A1</label>
    </ligand>
</feature>
<feature type="binding site" evidence="4">
    <location>
        <position position="200"/>
    </location>
    <ligand>
        <name>Cu cation</name>
        <dbReference type="ChEBI" id="CHEBI:23378"/>
        <label>A2</label>
    </ligand>
</feature>
<feature type="binding site" evidence="4">
    <location>
        <position position="204"/>
    </location>
    <ligand>
        <name>Cu cation</name>
        <dbReference type="ChEBI" id="CHEBI:23378"/>
        <label>A2</label>
    </ligand>
</feature>
<feature type="binding site" evidence="4">
    <location>
        <position position="207"/>
    </location>
    <ligand>
        <name>Cu cation</name>
        <dbReference type="ChEBI" id="CHEBI:23378"/>
        <label>A1</label>
    </ligand>
</feature>
<feature type="modified residue" description="Phosphotyrosine" evidence="2">
    <location>
        <position position="218"/>
    </location>
</feature>
<organism>
    <name type="scientific">Canis simensis</name>
    <name type="common">Ethiopian wolf</name>
    <name type="synonym">Simenia simensis</name>
    <dbReference type="NCBI Taxonomy" id="32534"/>
    <lineage>
        <taxon>Eukaryota</taxon>
        <taxon>Metazoa</taxon>
        <taxon>Chordata</taxon>
        <taxon>Craniata</taxon>
        <taxon>Vertebrata</taxon>
        <taxon>Euteleostomi</taxon>
        <taxon>Mammalia</taxon>
        <taxon>Eutheria</taxon>
        <taxon>Laurasiatheria</taxon>
        <taxon>Carnivora</taxon>
        <taxon>Caniformia</taxon>
        <taxon>Canidae</taxon>
        <taxon>Canis</taxon>
    </lineage>
</organism>